<comment type="function">
    <text evidence="1">The RuvA-RuvB-RuvC complex processes Holliday junction (HJ) DNA during genetic recombination and DNA repair. Endonuclease that resolves HJ intermediates. Cleaves cruciform DNA by making single-stranded nicks across the HJ at symmetrical positions within the homologous arms, yielding a 5'-phosphate and a 3'-hydroxyl group; requires a central core of homology in the junction. The consensus cleavage sequence is 5'-(A/T)TT(C/G)-3'. Cleavage occurs on the 3'-side of the TT dinucleotide at the point of strand exchange. HJ branch migration catalyzed by RuvA-RuvB allows RuvC to scan DNA until it finds its consensus sequence, where it cleaves and resolves the cruciform DNA.</text>
</comment>
<comment type="catalytic activity">
    <reaction evidence="1">
        <text>Endonucleolytic cleavage at a junction such as a reciprocal single-stranded crossover between two homologous DNA duplexes (Holliday junction).</text>
        <dbReference type="EC" id="3.1.21.10"/>
    </reaction>
</comment>
<comment type="cofactor">
    <cofactor evidence="1">
        <name>Mg(2+)</name>
        <dbReference type="ChEBI" id="CHEBI:18420"/>
    </cofactor>
    <text evidence="1">Binds 2 Mg(2+) ion per subunit.</text>
</comment>
<comment type="subunit">
    <text evidence="1">Homodimer which binds Holliday junction (HJ) DNA. The HJ becomes 2-fold symmetrical on binding to RuvC with unstacked arms; it has a different conformation from HJ DNA in complex with RuvA. In the full resolvosome a probable DNA-RuvA(4)-RuvB(12)-RuvC(2) complex forms which resolves the HJ.</text>
</comment>
<comment type="subcellular location">
    <subcellularLocation>
        <location evidence="1">Cytoplasm</location>
    </subcellularLocation>
</comment>
<comment type="similarity">
    <text evidence="1">Belongs to the RuvC family.</text>
</comment>
<accession>B7MVZ4</accession>
<protein>
    <recommendedName>
        <fullName evidence="1">Crossover junction endodeoxyribonuclease RuvC</fullName>
        <ecNumber evidence="1">3.1.21.10</ecNumber>
    </recommendedName>
    <alternativeName>
        <fullName evidence="1">Holliday junction nuclease RuvC</fullName>
    </alternativeName>
    <alternativeName>
        <fullName evidence="1">Holliday junction resolvase RuvC</fullName>
    </alternativeName>
</protein>
<gene>
    <name evidence="1" type="primary">ruvC</name>
    <name type="ordered locus">ECED1_2068</name>
</gene>
<feature type="chain" id="PRO_1000195257" description="Crossover junction endodeoxyribonuclease RuvC">
    <location>
        <begin position="1"/>
        <end position="173"/>
    </location>
</feature>
<feature type="active site" evidence="1">
    <location>
        <position position="8"/>
    </location>
</feature>
<feature type="active site" evidence="1">
    <location>
        <position position="67"/>
    </location>
</feature>
<feature type="active site" evidence="1">
    <location>
        <position position="139"/>
    </location>
</feature>
<feature type="binding site" evidence="1">
    <location>
        <position position="8"/>
    </location>
    <ligand>
        <name>Mg(2+)</name>
        <dbReference type="ChEBI" id="CHEBI:18420"/>
        <label>1</label>
    </ligand>
</feature>
<feature type="binding site" evidence="1">
    <location>
        <position position="67"/>
    </location>
    <ligand>
        <name>Mg(2+)</name>
        <dbReference type="ChEBI" id="CHEBI:18420"/>
        <label>2</label>
    </ligand>
</feature>
<feature type="binding site" evidence="1">
    <location>
        <position position="139"/>
    </location>
    <ligand>
        <name>Mg(2+)</name>
        <dbReference type="ChEBI" id="CHEBI:18420"/>
        <label>1</label>
    </ligand>
</feature>
<sequence>MAIILGIDPGSRVTGYGVIRQVGRQLSYLGSGCIRTKVDDLPSRLKLIYAGVTEIITQFQPDYFAIEQVFMAKNADSALKLGQARGVAIVAAVNQELPVFEYAARQVKQTVVGIGSAEKSQVQHMVRTLLKLPANPQADAADALAIAITHCHVSQNAMQMSESRLNLARGRLR</sequence>
<proteinExistence type="inferred from homology"/>
<dbReference type="EC" id="3.1.21.10" evidence="1"/>
<dbReference type="EMBL" id="CU928162">
    <property type="protein sequence ID" value="CAR08260.2"/>
    <property type="molecule type" value="Genomic_DNA"/>
</dbReference>
<dbReference type="RefSeq" id="WP_001295503.1">
    <property type="nucleotide sequence ID" value="NC_011745.1"/>
</dbReference>
<dbReference type="SMR" id="B7MVZ4"/>
<dbReference type="GeneID" id="89516631"/>
<dbReference type="KEGG" id="ecq:ECED1_2068"/>
<dbReference type="HOGENOM" id="CLU_091257_2_1_6"/>
<dbReference type="Proteomes" id="UP000000748">
    <property type="component" value="Chromosome"/>
</dbReference>
<dbReference type="GO" id="GO:0005737">
    <property type="term" value="C:cytoplasm"/>
    <property type="evidence" value="ECO:0007669"/>
    <property type="project" value="UniProtKB-SubCell"/>
</dbReference>
<dbReference type="GO" id="GO:0048476">
    <property type="term" value="C:Holliday junction resolvase complex"/>
    <property type="evidence" value="ECO:0007669"/>
    <property type="project" value="UniProtKB-UniRule"/>
</dbReference>
<dbReference type="GO" id="GO:0008821">
    <property type="term" value="F:crossover junction DNA endonuclease activity"/>
    <property type="evidence" value="ECO:0007669"/>
    <property type="project" value="UniProtKB-UniRule"/>
</dbReference>
<dbReference type="GO" id="GO:0003677">
    <property type="term" value="F:DNA binding"/>
    <property type="evidence" value="ECO:0007669"/>
    <property type="project" value="UniProtKB-KW"/>
</dbReference>
<dbReference type="GO" id="GO:0000287">
    <property type="term" value="F:magnesium ion binding"/>
    <property type="evidence" value="ECO:0007669"/>
    <property type="project" value="UniProtKB-UniRule"/>
</dbReference>
<dbReference type="GO" id="GO:0006310">
    <property type="term" value="P:DNA recombination"/>
    <property type="evidence" value="ECO:0007669"/>
    <property type="project" value="UniProtKB-UniRule"/>
</dbReference>
<dbReference type="GO" id="GO:0006281">
    <property type="term" value="P:DNA repair"/>
    <property type="evidence" value="ECO:0007669"/>
    <property type="project" value="UniProtKB-UniRule"/>
</dbReference>
<dbReference type="CDD" id="cd16962">
    <property type="entry name" value="RuvC"/>
    <property type="match status" value="1"/>
</dbReference>
<dbReference type="FunFam" id="3.30.420.10:FF:000002">
    <property type="entry name" value="Crossover junction endodeoxyribonuclease RuvC"/>
    <property type="match status" value="1"/>
</dbReference>
<dbReference type="Gene3D" id="3.30.420.10">
    <property type="entry name" value="Ribonuclease H-like superfamily/Ribonuclease H"/>
    <property type="match status" value="1"/>
</dbReference>
<dbReference type="HAMAP" id="MF_00034">
    <property type="entry name" value="RuvC"/>
    <property type="match status" value="1"/>
</dbReference>
<dbReference type="InterPro" id="IPR012337">
    <property type="entry name" value="RNaseH-like_sf"/>
</dbReference>
<dbReference type="InterPro" id="IPR036397">
    <property type="entry name" value="RNaseH_sf"/>
</dbReference>
<dbReference type="InterPro" id="IPR020563">
    <property type="entry name" value="X-over_junc_endoDNase_Mg_BS"/>
</dbReference>
<dbReference type="InterPro" id="IPR002176">
    <property type="entry name" value="X-over_junc_endoDNase_RuvC"/>
</dbReference>
<dbReference type="NCBIfam" id="NF000711">
    <property type="entry name" value="PRK00039.2-1"/>
    <property type="match status" value="1"/>
</dbReference>
<dbReference type="NCBIfam" id="TIGR00228">
    <property type="entry name" value="ruvC"/>
    <property type="match status" value="1"/>
</dbReference>
<dbReference type="PANTHER" id="PTHR30194">
    <property type="entry name" value="CROSSOVER JUNCTION ENDODEOXYRIBONUCLEASE RUVC"/>
    <property type="match status" value="1"/>
</dbReference>
<dbReference type="PANTHER" id="PTHR30194:SF3">
    <property type="entry name" value="CROSSOVER JUNCTION ENDODEOXYRIBONUCLEASE RUVC"/>
    <property type="match status" value="1"/>
</dbReference>
<dbReference type="Pfam" id="PF02075">
    <property type="entry name" value="RuvC"/>
    <property type="match status" value="1"/>
</dbReference>
<dbReference type="PRINTS" id="PR00696">
    <property type="entry name" value="RSOLVASERUVC"/>
</dbReference>
<dbReference type="SUPFAM" id="SSF53098">
    <property type="entry name" value="Ribonuclease H-like"/>
    <property type="match status" value="1"/>
</dbReference>
<dbReference type="PROSITE" id="PS01321">
    <property type="entry name" value="RUVC"/>
    <property type="match status" value="1"/>
</dbReference>
<evidence type="ECO:0000255" key="1">
    <source>
        <dbReference type="HAMAP-Rule" id="MF_00034"/>
    </source>
</evidence>
<keyword id="KW-0963">Cytoplasm</keyword>
<keyword id="KW-0227">DNA damage</keyword>
<keyword id="KW-0233">DNA recombination</keyword>
<keyword id="KW-0234">DNA repair</keyword>
<keyword id="KW-0238">DNA-binding</keyword>
<keyword id="KW-0255">Endonuclease</keyword>
<keyword id="KW-0378">Hydrolase</keyword>
<keyword id="KW-0460">Magnesium</keyword>
<keyword id="KW-0479">Metal-binding</keyword>
<keyword id="KW-0540">Nuclease</keyword>
<organism>
    <name type="scientific">Escherichia coli O81 (strain ED1a)</name>
    <dbReference type="NCBI Taxonomy" id="585397"/>
    <lineage>
        <taxon>Bacteria</taxon>
        <taxon>Pseudomonadati</taxon>
        <taxon>Pseudomonadota</taxon>
        <taxon>Gammaproteobacteria</taxon>
        <taxon>Enterobacterales</taxon>
        <taxon>Enterobacteriaceae</taxon>
        <taxon>Escherichia</taxon>
    </lineage>
</organism>
<reference key="1">
    <citation type="journal article" date="2009" name="PLoS Genet.">
        <title>Organised genome dynamics in the Escherichia coli species results in highly diverse adaptive paths.</title>
        <authorList>
            <person name="Touchon M."/>
            <person name="Hoede C."/>
            <person name="Tenaillon O."/>
            <person name="Barbe V."/>
            <person name="Baeriswyl S."/>
            <person name="Bidet P."/>
            <person name="Bingen E."/>
            <person name="Bonacorsi S."/>
            <person name="Bouchier C."/>
            <person name="Bouvet O."/>
            <person name="Calteau A."/>
            <person name="Chiapello H."/>
            <person name="Clermont O."/>
            <person name="Cruveiller S."/>
            <person name="Danchin A."/>
            <person name="Diard M."/>
            <person name="Dossat C."/>
            <person name="Karoui M.E."/>
            <person name="Frapy E."/>
            <person name="Garry L."/>
            <person name="Ghigo J.M."/>
            <person name="Gilles A.M."/>
            <person name="Johnson J."/>
            <person name="Le Bouguenec C."/>
            <person name="Lescat M."/>
            <person name="Mangenot S."/>
            <person name="Martinez-Jehanne V."/>
            <person name="Matic I."/>
            <person name="Nassif X."/>
            <person name="Oztas S."/>
            <person name="Petit M.A."/>
            <person name="Pichon C."/>
            <person name="Rouy Z."/>
            <person name="Ruf C.S."/>
            <person name="Schneider D."/>
            <person name="Tourret J."/>
            <person name="Vacherie B."/>
            <person name="Vallenet D."/>
            <person name="Medigue C."/>
            <person name="Rocha E.P.C."/>
            <person name="Denamur E."/>
        </authorList>
    </citation>
    <scope>NUCLEOTIDE SEQUENCE [LARGE SCALE GENOMIC DNA]</scope>
    <source>
        <strain>ED1a</strain>
    </source>
</reference>
<name>RUVC_ECO81</name>